<name>RP07_MONPV</name>
<organism>
    <name type="scientific">Monkeypox virus</name>
    <dbReference type="NCBI Taxonomy" id="10244"/>
    <lineage>
        <taxon>Viruses</taxon>
        <taxon>Varidnaviria</taxon>
        <taxon>Bamfordvirae</taxon>
        <taxon>Nucleocytoviricota</taxon>
        <taxon>Pokkesviricetes</taxon>
        <taxon>Chitovirales</taxon>
        <taxon>Poxviridae</taxon>
        <taxon>Chordopoxvirinae</taxon>
        <taxon>Orthopoxvirus</taxon>
    </lineage>
</organism>
<organismHost>
    <name type="scientific">Cynomys gunnisoni</name>
    <name type="common">Gunnison's prairie dog</name>
    <name type="synonym">Spermophilus gunnisoni</name>
    <dbReference type="NCBI Taxonomy" id="45479"/>
</organismHost>
<organismHost>
    <name type="scientific">Cynomys leucurus</name>
    <name type="common">White-tailed prairie dog</name>
    <dbReference type="NCBI Taxonomy" id="99825"/>
</organismHost>
<organismHost>
    <name type="scientific">Cynomys ludovicianus</name>
    <name type="common">Black-tailed prairie dog</name>
    <dbReference type="NCBI Taxonomy" id="45480"/>
</organismHost>
<organismHost>
    <name type="scientific">Cynomys mexicanus</name>
    <name type="common">Mexican prairie dog</name>
    <dbReference type="NCBI Taxonomy" id="99826"/>
</organismHost>
<organismHost>
    <name type="scientific">Cynomys parvidens</name>
    <name type="common">Utah prairie dog</name>
    <dbReference type="NCBI Taxonomy" id="99827"/>
</organismHost>
<organismHost>
    <name type="scientific">Gliridae</name>
    <name type="common">dormice</name>
    <dbReference type="NCBI Taxonomy" id="30650"/>
</organismHost>
<organismHost>
    <name type="scientific">Heliosciurus ruwenzorii</name>
    <name type="common">Ruwenzori sun squirrel</name>
    <dbReference type="NCBI Taxonomy" id="226685"/>
</organismHost>
<organismHost>
    <name type="scientific">Homo sapiens</name>
    <name type="common">Human</name>
    <dbReference type="NCBI Taxonomy" id="9606"/>
</organismHost>
<organismHost>
    <name type="scientific">Mus musculus</name>
    <name type="common">Mouse</name>
    <dbReference type="NCBI Taxonomy" id="10090"/>
</organismHost>
<proteinExistence type="inferred from homology"/>
<gene>
    <name type="primary">OPG090</name>
    <name type="synonym">RPO7</name>
    <name type="ORF">MPXVgp075</name>
</gene>
<keyword id="KW-0240">DNA-directed RNA polymerase</keyword>
<keyword id="KW-0244">Early protein</keyword>
<keyword id="KW-0548">Nucleotidyltransferase</keyword>
<keyword id="KW-1185">Reference proteome</keyword>
<keyword id="KW-0804">Transcription</keyword>
<keyword id="KW-0808">Transferase</keyword>
<keyword id="KW-0946">Virion</keyword>
<sequence>MVFQLVCSTCGKDISHERYKLIIRKKSLKDVLVSVKNECCRLKLSTQIEPQRNLTVQPLLDIN</sequence>
<feature type="chain" id="PRO_0000457682" description="DNA-directed RNA polymerase 7 kDa subunit">
    <location>
        <begin position="1"/>
        <end position="63"/>
    </location>
</feature>
<reference key="1">
    <citation type="journal article" date="2022" name="J. Infect. Dis.">
        <title>Exportation of Monkeypox virus from the African continent.</title>
        <authorList>
            <person name="Mauldin M.R."/>
            <person name="McCollum A.M."/>
            <person name="Nakazawa Y.J."/>
            <person name="Mandra A."/>
            <person name="Whitehouse E.R."/>
            <person name="Davidson W."/>
            <person name="Zhao H."/>
            <person name="Gao J."/>
            <person name="Li Y."/>
            <person name="Doty J."/>
            <person name="Yinka-Ogunleye A."/>
            <person name="Akinpelu A."/>
            <person name="Aruna O."/>
            <person name="Naidoo D."/>
            <person name="Lewandowski K."/>
            <person name="Afrough B."/>
            <person name="Graham V."/>
            <person name="Aarons E."/>
            <person name="Hewson R."/>
            <person name="Vipond R."/>
            <person name="Dunning J."/>
            <person name="Chand M."/>
            <person name="Brown C."/>
            <person name="Cohen-Gihon I."/>
            <person name="Erez N."/>
            <person name="Shifman O."/>
            <person name="Israeli O."/>
            <person name="Sharon M."/>
            <person name="Schwartz E."/>
            <person name="Beth-Din A."/>
            <person name="Zvi A."/>
            <person name="Mak T.M."/>
            <person name="Ng Y.K."/>
            <person name="Cui L."/>
            <person name="Lin R.T.P."/>
            <person name="Olson V.A."/>
            <person name="Brooks T."/>
            <person name="Paran N."/>
            <person name="Ihekweazu C."/>
            <person name="Reynolds M.G."/>
        </authorList>
    </citation>
    <scope>NUCLEOTIDE SEQUENCE [LARGE SCALE GENOMIC DNA]</scope>
    <source>
        <strain>MPXV-M5312_HM12_Rivers</strain>
    </source>
</reference>
<evidence type="ECO:0000250" key="1">
    <source>
        <dbReference type="UniProtKB" id="P68317"/>
    </source>
</evidence>
<evidence type="ECO:0000305" key="2"/>
<comment type="function">
    <text evidence="1">Part of the DNA-dependent RNA polymerase which catalyzes the transcription of viral DNA into RNA using the four ribonucleoside triphosphates as substrates. Responsible for the transcription of early, intermediate and late genes. DNA-dependent RNA polymerase associates with the early transcription factor (ETF), itself composed of OPG118 and OPG134, thereby allowing the early genes transcription. Late transcription, and probably also intermediate transcription, require newly synthesized RNA polymerase.</text>
</comment>
<comment type="catalytic activity">
    <reaction evidence="1">
        <text>RNA(n) + a ribonucleoside 5'-triphosphate = RNA(n+1) + diphosphate</text>
        <dbReference type="Rhea" id="RHEA:21248"/>
        <dbReference type="Rhea" id="RHEA-COMP:14527"/>
        <dbReference type="Rhea" id="RHEA-COMP:17342"/>
        <dbReference type="ChEBI" id="CHEBI:33019"/>
        <dbReference type="ChEBI" id="CHEBI:61557"/>
        <dbReference type="ChEBI" id="CHEBI:140395"/>
        <dbReference type="EC" id="2.7.7.6"/>
    </reaction>
</comment>
<comment type="subunit">
    <text evidence="1">The DNA-dependent RNA polymerase (vRNAP) consists of eight subunits encoded by early viral genes and termed according to their apparent molecular masses Rpo147, Rpo132, Rpo35, Rpo30, Rpo22, Rpo19, Rpo18, and Rpo7. The same holoenzyme, with the addition of the transcription-specificity factor RAP94, is used for early gene expression.</text>
</comment>
<comment type="subcellular location">
    <subcellularLocation>
        <location evidence="1">Virion</location>
    </subcellularLocation>
    <text evidence="1">All the enzymes and other proteins required to synthesize early mRNAs are packaged within the virion core along with the DNA genome. This is necessary because viral early mRNAs are synthesized within minutes after virus entry into the cell and are extruded through pores in the core particle.</text>
</comment>
<comment type="similarity">
    <text evidence="2">Belongs to the poxviridae DNA-directed RNA polymerase 7 kDa subunit family.</text>
</comment>
<protein>
    <recommendedName>
        <fullName>DNA-directed RNA polymerase 7 kDa subunit</fullName>
        <ecNumber>2.7.7.6</ecNumber>
    </recommendedName>
</protein>
<accession>A0A7H0DN62</accession>
<dbReference type="EC" id="2.7.7.6"/>
<dbReference type="EMBL" id="MT903340">
    <property type="protein sequence ID" value="QNP12945.1"/>
    <property type="molecule type" value="Genomic_DNA"/>
</dbReference>
<dbReference type="RefSeq" id="NP_536502.1">
    <property type="nucleotide sequence ID" value="NC_003310.1"/>
</dbReference>
<dbReference type="RefSeq" id="YP_010377072.1">
    <property type="nucleotide sequence ID" value="NC_063383.1"/>
</dbReference>
<dbReference type="SMR" id="A0A7H0DN62"/>
<dbReference type="GeneID" id="72551485"/>
<dbReference type="GeneID" id="928884"/>
<dbReference type="KEGG" id="vg:928884"/>
<dbReference type="Proteomes" id="UP000516359">
    <property type="component" value="Genome"/>
</dbReference>
<dbReference type="GO" id="GO:0000428">
    <property type="term" value="C:DNA-directed RNA polymerase complex"/>
    <property type="evidence" value="ECO:0007669"/>
    <property type="project" value="UniProtKB-KW"/>
</dbReference>
<dbReference type="GO" id="GO:0044423">
    <property type="term" value="C:virion component"/>
    <property type="evidence" value="ECO:0007669"/>
    <property type="project" value="UniProtKB-KW"/>
</dbReference>
<dbReference type="GO" id="GO:0003677">
    <property type="term" value="F:DNA binding"/>
    <property type="evidence" value="ECO:0007669"/>
    <property type="project" value="InterPro"/>
</dbReference>
<dbReference type="GO" id="GO:0003899">
    <property type="term" value="F:DNA-directed RNA polymerase activity"/>
    <property type="evidence" value="ECO:0007669"/>
    <property type="project" value="InterPro"/>
</dbReference>
<dbReference type="GO" id="GO:0006351">
    <property type="term" value="P:DNA-templated transcription"/>
    <property type="evidence" value="ECO:0007669"/>
    <property type="project" value="InterPro"/>
</dbReference>
<dbReference type="InterPro" id="IPR008448">
    <property type="entry name" value="RNA_pol_7kDa_chordopoxvir"/>
</dbReference>
<dbReference type="Pfam" id="PF05864">
    <property type="entry name" value="Chordopox_RPO7"/>
    <property type="match status" value="1"/>
</dbReference>